<accession>Q38YD9</accession>
<gene>
    <name evidence="1" type="primary">recA</name>
    <name type="ordered locus">LCA_0487</name>
</gene>
<feature type="chain" id="PRO_1000071893" description="Protein RecA">
    <location>
        <begin position="1"/>
        <end position="355"/>
    </location>
</feature>
<feature type="region of interest" description="Disordered" evidence="2">
    <location>
        <begin position="331"/>
        <end position="355"/>
    </location>
</feature>
<feature type="compositionally biased region" description="Acidic residues" evidence="2">
    <location>
        <begin position="332"/>
        <end position="344"/>
    </location>
</feature>
<feature type="binding site" evidence="1">
    <location>
        <begin position="66"/>
        <end position="73"/>
    </location>
    <ligand>
        <name>ATP</name>
        <dbReference type="ChEBI" id="CHEBI:30616"/>
    </ligand>
</feature>
<keyword id="KW-0067">ATP-binding</keyword>
<keyword id="KW-0963">Cytoplasm</keyword>
<keyword id="KW-0227">DNA damage</keyword>
<keyword id="KW-0233">DNA recombination</keyword>
<keyword id="KW-0234">DNA repair</keyword>
<keyword id="KW-0238">DNA-binding</keyword>
<keyword id="KW-0547">Nucleotide-binding</keyword>
<keyword id="KW-1185">Reference proteome</keyword>
<keyword id="KW-0742">SOS response</keyword>
<comment type="function">
    <text evidence="1">Can catalyze the hydrolysis of ATP in the presence of single-stranded DNA, the ATP-dependent uptake of single-stranded DNA by duplex DNA, and the ATP-dependent hybridization of homologous single-stranded DNAs. It interacts with LexA causing its activation and leading to its autocatalytic cleavage.</text>
</comment>
<comment type="subcellular location">
    <subcellularLocation>
        <location evidence="1">Cytoplasm</location>
    </subcellularLocation>
</comment>
<comment type="similarity">
    <text evidence="1">Belongs to the RecA family.</text>
</comment>
<dbReference type="EMBL" id="CR936503">
    <property type="protein sequence ID" value="CAI54788.1"/>
    <property type="molecule type" value="Genomic_DNA"/>
</dbReference>
<dbReference type="RefSeq" id="WP_011374196.1">
    <property type="nucleotide sequence ID" value="NC_007576.1"/>
</dbReference>
<dbReference type="SMR" id="Q38YD9"/>
<dbReference type="STRING" id="314315.LCA_0487"/>
<dbReference type="GeneID" id="57133351"/>
<dbReference type="KEGG" id="lsa:LCA_0487"/>
<dbReference type="eggNOG" id="COG0468">
    <property type="taxonomic scope" value="Bacteria"/>
</dbReference>
<dbReference type="HOGENOM" id="CLU_040469_3_2_9"/>
<dbReference type="OrthoDB" id="9776733at2"/>
<dbReference type="Proteomes" id="UP000002707">
    <property type="component" value="Chromosome"/>
</dbReference>
<dbReference type="GO" id="GO:0005829">
    <property type="term" value="C:cytosol"/>
    <property type="evidence" value="ECO:0007669"/>
    <property type="project" value="TreeGrafter"/>
</dbReference>
<dbReference type="GO" id="GO:0005524">
    <property type="term" value="F:ATP binding"/>
    <property type="evidence" value="ECO:0007669"/>
    <property type="project" value="UniProtKB-UniRule"/>
</dbReference>
<dbReference type="GO" id="GO:0016887">
    <property type="term" value="F:ATP hydrolysis activity"/>
    <property type="evidence" value="ECO:0007669"/>
    <property type="project" value="InterPro"/>
</dbReference>
<dbReference type="GO" id="GO:0140664">
    <property type="term" value="F:ATP-dependent DNA damage sensor activity"/>
    <property type="evidence" value="ECO:0007669"/>
    <property type="project" value="InterPro"/>
</dbReference>
<dbReference type="GO" id="GO:0003684">
    <property type="term" value="F:damaged DNA binding"/>
    <property type="evidence" value="ECO:0007669"/>
    <property type="project" value="UniProtKB-UniRule"/>
</dbReference>
<dbReference type="GO" id="GO:0003697">
    <property type="term" value="F:single-stranded DNA binding"/>
    <property type="evidence" value="ECO:0007669"/>
    <property type="project" value="UniProtKB-UniRule"/>
</dbReference>
<dbReference type="GO" id="GO:0006310">
    <property type="term" value="P:DNA recombination"/>
    <property type="evidence" value="ECO:0007669"/>
    <property type="project" value="UniProtKB-UniRule"/>
</dbReference>
<dbReference type="GO" id="GO:0006281">
    <property type="term" value="P:DNA repair"/>
    <property type="evidence" value="ECO:0007669"/>
    <property type="project" value="UniProtKB-UniRule"/>
</dbReference>
<dbReference type="GO" id="GO:0009432">
    <property type="term" value="P:SOS response"/>
    <property type="evidence" value="ECO:0007669"/>
    <property type="project" value="UniProtKB-UniRule"/>
</dbReference>
<dbReference type="CDD" id="cd00983">
    <property type="entry name" value="RecA"/>
    <property type="match status" value="1"/>
</dbReference>
<dbReference type="FunFam" id="3.40.50.300:FF:000087">
    <property type="entry name" value="Recombinase RecA"/>
    <property type="match status" value="1"/>
</dbReference>
<dbReference type="Gene3D" id="3.40.50.300">
    <property type="entry name" value="P-loop containing nucleotide triphosphate hydrolases"/>
    <property type="match status" value="1"/>
</dbReference>
<dbReference type="HAMAP" id="MF_00268">
    <property type="entry name" value="RecA"/>
    <property type="match status" value="1"/>
</dbReference>
<dbReference type="InterPro" id="IPR003593">
    <property type="entry name" value="AAA+_ATPase"/>
</dbReference>
<dbReference type="InterPro" id="IPR013765">
    <property type="entry name" value="DNA_recomb/repair_RecA"/>
</dbReference>
<dbReference type="InterPro" id="IPR020584">
    <property type="entry name" value="DNA_recomb/repair_RecA_CS"/>
</dbReference>
<dbReference type="InterPro" id="IPR027417">
    <property type="entry name" value="P-loop_NTPase"/>
</dbReference>
<dbReference type="InterPro" id="IPR049261">
    <property type="entry name" value="RecA-like_C"/>
</dbReference>
<dbReference type="InterPro" id="IPR049428">
    <property type="entry name" value="RecA-like_N"/>
</dbReference>
<dbReference type="InterPro" id="IPR020588">
    <property type="entry name" value="RecA_ATP-bd"/>
</dbReference>
<dbReference type="InterPro" id="IPR023400">
    <property type="entry name" value="RecA_C_sf"/>
</dbReference>
<dbReference type="InterPro" id="IPR020587">
    <property type="entry name" value="RecA_monomer-monomer_interface"/>
</dbReference>
<dbReference type="NCBIfam" id="TIGR02012">
    <property type="entry name" value="tigrfam_recA"/>
    <property type="match status" value="1"/>
</dbReference>
<dbReference type="PANTHER" id="PTHR45900:SF1">
    <property type="entry name" value="MITOCHONDRIAL DNA REPAIR PROTEIN RECA HOMOLOG-RELATED"/>
    <property type="match status" value="1"/>
</dbReference>
<dbReference type="PANTHER" id="PTHR45900">
    <property type="entry name" value="RECA"/>
    <property type="match status" value="1"/>
</dbReference>
<dbReference type="Pfam" id="PF00154">
    <property type="entry name" value="RecA"/>
    <property type="match status" value="1"/>
</dbReference>
<dbReference type="Pfam" id="PF21096">
    <property type="entry name" value="RecA_C"/>
    <property type="match status" value="1"/>
</dbReference>
<dbReference type="PRINTS" id="PR00142">
    <property type="entry name" value="RECA"/>
</dbReference>
<dbReference type="SMART" id="SM00382">
    <property type="entry name" value="AAA"/>
    <property type="match status" value="1"/>
</dbReference>
<dbReference type="SUPFAM" id="SSF52540">
    <property type="entry name" value="P-loop containing nucleoside triphosphate hydrolases"/>
    <property type="match status" value="1"/>
</dbReference>
<dbReference type="SUPFAM" id="SSF54752">
    <property type="entry name" value="RecA protein, C-terminal domain"/>
    <property type="match status" value="1"/>
</dbReference>
<dbReference type="PROSITE" id="PS00321">
    <property type="entry name" value="RECA_1"/>
    <property type="match status" value="1"/>
</dbReference>
<dbReference type="PROSITE" id="PS50162">
    <property type="entry name" value="RECA_2"/>
    <property type="match status" value="1"/>
</dbReference>
<dbReference type="PROSITE" id="PS50163">
    <property type="entry name" value="RECA_3"/>
    <property type="match status" value="1"/>
</dbReference>
<reference key="1">
    <citation type="journal article" date="2005" name="Nat. Biotechnol.">
        <title>The complete genome sequence of the meat-borne lactic acid bacterium Lactobacillus sakei 23K.</title>
        <authorList>
            <person name="Chaillou S."/>
            <person name="Champomier-Verges M.-C."/>
            <person name="Cornet M."/>
            <person name="Crutz-Le Coq A.-M."/>
            <person name="Dudez A.-M."/>
            <person name="Martin V."/>
            <person name="Beaufils S."/>
            <person name="Darbon-Rongere E."/>
            <person name="Bossy R."/>
            <person name="Loux V."/>
            <person name="Zagorec M."/>
        </authorList>
    </citation>
    <scope>NUCLEOTIDE SEQUENCE [LARGE SCALE GENOMIC DNA]</scope>
    <source>
        <strain>23K</strain>
    </source>
</reference>
<evidence type="ECO:0000255" key="1">
    <source>
        <dbReference type="HAMAP-Rule" id="MF_00268"/>
    </source>
</evidence>
<evidence type="ECO:0000256" key="2">
    <source>
        <dbReference type="SAM" id="MobiDB-lite"/>
    </source>
</evidence>
<protein>
    <recommendedName>
        <fullName evidence="1">Protein RecA</fullName>
    </recommendedName>
    <alternativeName>
        <fullName evidence="1">Recombinase A</fullName>
    </alternativeName>
</protein>
<proteinExistence type="inferred from homology"/>
<sequence>MAKDERQAALDAALKKIEKNFGKGSIMRMGEKVDTQVSTVSSGSLALDEALGVGGYPRGRIVEIYGPESSGKTTVALHAVAEVQKQGGTAAYIDAENAMDPKYATALGVNIDDLLLSQPDTGEQGLEIADALVSSGAVDILVVDSVAALVPRAEIEGEMGDAHVGLQARLMSQALRKLSGTINKTKTIALFINQIREKVGVMFGNPEVTPGGRALKFYSTVRLEVRRAETIKNGTDMIGNRARIKVVKNKVAPPFKVAEVDIMYGQGISRTGELVDMAVEKDIINKSGSWYSYGSERIGQGRENAKNYLADHEDVEDEVRLKVRAAYGISDVPEEDLPTTEDEQINILPDDSTEE</sequence>
<name>RECA_LATSS</name>
<organism>
    <name type="scientific">Latilactobacillus sakei subsp. sakei (strain 23K)</name>
    <name type="common">Lactobacillus sakei subsp. sakei</name>
    <dbReference type="NCBI Taxonomy" id="314315"/>
    <lineage>
        <taxon>Bacteria</taxon>
        <taxon>Bacillati</taxon>
        <taxon>Bacillota</taxon>
        <taxon>Bacilli</taxon>
        <taxon>Lactobacillales</taxon>
        <taxon>Lactobacillaceae</taxon>
        <taxon>Latilactobacillus</taxon>
    </lineage>
</organism>